<protein>
    <recommendedName>
        <fullName>Peptidoglycan DL-endopeptidase CwlO</fullName>
        <ecNumber>3.4.-.-</ecNumber>
    </recommendedName>
    <alternativeName>
        <fullName>D-gamma-glutamyl-meso-diaminopimelyl DL-endopeptidase</fullName>
    </alternativeName>
    <alternativeName>
        <fullName>PSPA2</fullName>
    </alternativeName>
</protein>
<comment type="function">
    <text>The C-terminal part of CwlO shows a cell wall hydrolytic DL-endopeptidase activity.</text>
</comment>
<comment type="activity regulation">
    <text evidence="4">Detected in exponentially growing cells, the 50 and 30 kDa processing products disappear upon entry into stationary phase with the concomitant appearance of a 20 kDa products. The 50 kDa form persists in the absence of extracellular proteases (PubMed:11987133).</text>
</comment>
<comment type="subcellular location">
    <subcellularLocation>
        <location evidence="4">Secreted</location>
    </subcellularLocation>
    <subcellularLocation>
        <location evidence="4">Secreted</location>
        <location evidence="4">Cell wall</location>
    </subcellularLocation>
</comment>
<comment type="developmental stage">
    <text evidence="4 5">Expressed during the early stage of the vegetative growth phase (PubMed:16233686). Not detected in stationary phase (PubMed:11987133).</text>
</comment>
<comment type="induction">
    <text evidence="6">Positively regulated by the two-component system YycFG.</text>
</comment>
<comment type="PTM">
    <text>Identified in the extracellular proteome as a number of processing products of about 50 and 30 kDa.</text>
</comment>
<comment type="disruption phenotype">
    <text evidence="5">Disruption of the cwlO gene affects neither the vegetative cell growth rate, cell morphology, motility, sporulation frequency nor the germination frequency.</text>
</comment>
<comment type="miscellaneous">
    <text>The N-terminal part of CwlO was shown to have no cell wall-binding activity.</text>
</comment>
<comment type="similarity">
    <text evidence="2 7">Belongs to the peptidase C40 family.</text>
</comment>
<name>CWLO_BACSU</name>
<gene>
    <name type="primary">cwlO</name>
    <name type="synonym">yvcE</name>
    <name type="synonym">yzkA</name>
    <name type="ordered locus">BSU34800</name>
</gene>
<reference key="1">
    <citation type="submission" date="1997-04" db="EMBL/GenBank/DDBJ databases">
        <authorList>
            <person name="Denizot F."/>
        </authorList>
    </citation>
    <scope>NUCLEOTIDE SEQUENCE [GENOMIC DNA]</scope>
    <source>
        <strain>168</strain>
    </source>
</reference>
<reference key="2">
    <citation type="journal article" date="1997" name="Nature">
        <title>The complete genome sequence of the Gram-positive bacterium Bacillus subtilis.</title>
        <authorList>
            <person name="Kunst F."/>
            <person name="Ogasawara N."/>
            <person name="Moszer I."/>
            <person name="Albertini A.M."/>
            <person name="Alloni G."/>
            <person name="Azevedo V."/>
            <person name="Bertero M.G."/>
            <person name="Bessieres P."/>
            <person name="Bolotin A."/>
            <person name="Borchert S."/>
            <person name="Borriss R."/>
            <person name="Boursier L."/>
            <person name="Brans A."/>
            <person name="Braun M."/>
            <person name="Brignell S.C."/>
            <person name="Bron S."/>
            <person name="Brouillet S."/>
            <person name="Bruschi C.V."/>
            <person name="Caldwell B."/>
            <person name="Capuano V."/>
            <person name="Carter N.M."/>
            <person name="Choi S.-K."/>
            <person name="Codani J.-J."/>
            <person name="Connerton I.F."/>
            <person name="Cummings N.J."/>
            <person name="Daniel R.A."/>
            <person name="Denizot F."/>
            <person name="Devine K.M."/>
            <person name="Duesterhoeft A."/>
            <person name="Ehrlich S.D."/>
            <person name="Emmerson P.T."/>
            <person name="Entian K.-D."/>
            <person name="Errington J."/>
            <person name="Fabret C."/>
            <person name="Ferrari E."/>
            <person name="Foulger D."/>
            <person name="Fritz C."/>
            <person name="Fujita M."/>
            <person name="Fujita Y."/>
            <person name="Fuma S."/>
            <person name="Galizzi A."/>
            <person name="Galleron N."/>
            <person name="Ghim S.-Y."/>
            <person name="Glaser P."/>
            <person name="Goffeau A."/>
            <person name="Golightly E.J."/>
            <person name="Grandi G."/>
            <person name="Guiseppi G."/>
            <person name="Guy B.J."/>
            <person name="Haga K."/>
            <person name="Haiech J."/>
            <person name="Harwood C.R."/>
            <person name="Henaut A."/>
            <person name="Hilbert H."/>
            <person name="Holsappel S."/>
            <person name="Hosono S."/>
            <person name="Hullo M.-F."/>
            <person name="Itaya M."/>
            <person name="Jones L.-M."/>
            <person name="Joris B."/>
            <person name="Karamata D."/>
            <person name="Kasahara Y."/>
            <person name="Klaerr-Blanchard M."/>
            <person name="Klein C."/>
            <person name="Kobayashi Y."/>
            <person name="Koetter P."/>
            <person name="Koningstein G."/>
            <person name="Krogh S."/>
            <person name="Kumano M."/>
            <person name="Kurita K."/>
            <person name="Lapidus A."/>
            <person name="Lardinois S."/>
            <person name="Lauber J."/>
            <person name="Lazarevic V."/>
            <person name="Lee S.-M."/>
            <person name="Levine A."/>
            <person name="Liu H."/>
            <person name="Masuda S."/>
            <person name="Mauel C."/>
            <person name="Medigue C."/>
            <person name="Medina N."/>
            <person name="Mellado R.P."/>
            <person name="Mizuno M."/>
            <person name="Moestl D."/>
            <person name="Nakai S."/>
            <person name="Noback M."/>
            <person name="Noone D."/>
            <person name="O'Reilly M."/>
            <person name="Ogawa K."/>
            <person name="Ogiwara A."/>
            <person name="Oudega B."/>
            <person name="Park S.-H."/>
            <person name="Parro V."/>
            <person name="Pohl T.M."/>
            <person name="Portetelle D."/>
            <person name="Porwollik S."/>
            <person name="Prescott A.M."/>
            <person name="Presecan E."/>
            <person name="Pujic P."/>
            <person name="Purnelle B."/>
            <person name="Rapoport G."/>
            <person name="Rey M."/>
            <person name="Reynolds S."/>
            <person name="Rieger M."/>
            <person name="Rivolta C."/>
            <person name="Rocha E."/>
            <person name="Roche B."/>
            <person name="Rose M."/>
            <person name="Sadaie Y."/>
            <person name="Sato T."/>
            <person name="Scanlan E."/>
            <person name="Schleich S."/>
            <person name="Schroeter R."/>
            <person name="Scoffone F."/>
            <person name="Sekiguchi J."/>
            <person name="Sekowska A."/>
            <person name="Seror S.J."/>
            <person name="Serror P."/>
            <person name="Shin B.-S."/>
            <person name="Soldo B."/>
            <person name="Sorokin A."/>
            <person name="Tacconi E."/>
            <person name="Takagi T."/>
            <person name="Takahashi H."/>
            <person name="Takemaru K."/>
            <person name="Takeuchi M."/>
            <person name="Tamakoshi A."/>
            <person name="Tanaka T."/>
            <person name="Terpstra P."/>
            <person name="Tognoni A."/>
            <person name="Tosato V."/>
            <person name="Uchiyama S."/>
            <person name="Vandenbol M."/>
            <person name="Vannier F."/>
            <person name="Vassarotti A."/>
            <person name="Viari A."/>
            <person name="Wambutt R."/>
            <person name="Wedler E."/>
            <person name="Wedler H."/>
            <person name="Weitzenegger T."/>
            <person name="Winters P."/>
            <person name="Wipat A."/>
            <person name="Yamamoto H."/>
            <person name="Yamane K."/>
            <person name="Yasumoto K."/>
            <person name="Yata K."/>
            <person name="Yoshida K."/>
            <person name="Yoshikawa H.-F."/>
            <person name="Zumstein E."/>
            <person name="Yoshikawa H."/>
            <person name="Danchin A."/>
        </authorList>
    </citation>
    <scope>NUCLEOTIDE SEQUENCE [LARGE SCALE GENOMIC DNA]</scope>
    <source>
        <strain>168</strain>
    </source>
</reference>
<reference key="3">
    <citation type="journal article" date="1988" name="Gene">
        <title>Characterization of signal-sequence-coding regions selected from the Bacillus subtilis chromosome.</title>
        <authorList>
            <person name="Smith H."/>
            <person name="de Jong A."/>
            <person name="Bron S."/>
            <person name="Venema G."/>
        </authorList>
    </citation>
    <scope>NUCLEOTIDE SEQUENCE [GENOMIC DNA] OF 1-71</scope>
</reference>
<reference key="4">
    <citation type="journal article" date="2002" name="Proteomics">
        <title>Stabilization of cell wall proteins in Bacillus subtilis: a proteomic approach.</title>
        <authorList>
            <person name="Antelmann H."/>
            <person name="Yamamoto H."/>
            <person name="Sekiguchi J."/>
            <person name="Hecker M."/>
        </authorList>
    </citation>
    <scope>ACTIVITY REGULATION</scope>
    <scope>SUBCELLULAR LOCATION</scope>
    <scope>IDENTIFICATION BY MASS SPECTROMETRY</scope>
    <source>
        <strain>168</strain>
    </source>
</reference>
<reference key="5">
    <citation type="journal article" date="2004" name="J. Biosci. Bioeng.">
        <title>Characterization of a new Bacillus subtilis peptidoglycan hydrolase gene, yvcE (named cwlO), and the enzymatic properties of its encoded protein.</title>
        <authorList>
            <person name="Yamaguchi H."/>
            <person name="Furuhata K."/>
            <person name="Fukushima T."/>
            <person name="Yamamoto H."/>
            <person name="Sekiguchi J."/>
        </authorList>
    </citation>
    <scope>CATALYTIC ACTIVITY</scope>
    <scope>EXPRESSION</scope>
    <scope>DISRUPTION PHENOTYPE</scope>
    <scope>GENE NAME</scope>
    <source>
        <strain>168</strain>
    </source>
</reference>
<reference key="6">
    <citation type="journal article" date="2007" name="Mol. Microbiol.">
        <title>The essential YycFG two-component system controls cell wall metabolism in Bacillus subtilis.</title>
        <authorList>
            <person name="Bisicchia P."/>
            <person name="Noone D."/>
            <person name="Lioliou E."/>
            <person name="Howell A."/>
            <person name="Quigley S."/>
            <person name="Jensen T."/>
            <person name="Jarmer H."/>
            <person name="Devine K.M."/>
        </authorList>
    </citation>
    <scope>INDUCTION BY YYCFG</scope>
</reference>
<accession>P40767</accession>
<accession>O06969</accession>
<feature type="signal peptide" evidence="1">
    <location>
        <begin position="1"/>
        <end position="30"/>
    </location>
</feature>
<feature type="chain" id="PRO_0000213727" description="Peptidoglycan DL-endopeptidase CwlO">
    <location>
        <begin position="31"/>
        <end position="473"/>
    </location>
</feature>
<feature type="domain" description="NlpC/P60" evidence="2">
    <location>
        <begin position="340"/>
        <end position="471"/>
    </location>
</feature>
<feature type="region of interest" description="Disordered" evidence="3">
    <location>
        <begin position="31"/>
        <end position="52"/>
    </location>
</feature>
<feature type="region of interest" description="Disordered" evidence="3">
    <location>
        <begin position="79"/>
        <end position="98"/>
    </location>
</feature>
<feature type="region of interest" description="Disordered" evidence="3">
    <location>
        <begin position="237"/>
        <end position="337"/>
    </location>
</feature>
<feature type="compositionally biased region" description="Basic and acidic residues" evidence="3">
    <location>
        <begin position="33"/>
        <end position="44"/>
    </location>
</feature>
<feature type="compositionally biased region" description="Polar residues" evidence="3">
    <location>
        <begin position="241"/>
        <end position="250"/>
    </location>
</feature>
<feature type="compositionally biased region" description="Basic and acidic residues" evidence="3">
    <location>
        <begin position="251"/>
        <end position="260"/>
    </location>
</feature>
<feature type="compositionally biased region" description="Basic and acidic residues" evidence="3">
    <location>
        <begin position="267"/>
        <end position="277"/>
    </location>
</feature>
<feature type="compositionally biased region" description="Low complexity" evidence="3">
    <location>
        <begin position="291"/>
        <end position="337"/>
    </location>
</feature>
<feature type="active site" description="Nucleophile" evidence="2">
    <location>
        <position position="377"/>
    </location>
</feature>
<feature type="active site" description="Proton acceptor" evidence="2">
    <location>
        <position position="431"/>
    </location>
</feature>
<feature type="active site" evidence="2">
    <location>
        <position position="443"/>
    </location>
</feature>
<feature type="helix" evidence="8">
    <location>
        <begin position="342"/>
        <end position="352"/>
    </location>
</feature>
<feature type="turn" evidence="8">
    <location>
        <begin position="353"/>
        <end position="355"/>
    </location>
</feature>
<feature type="strand" evidence="8">
    <location>
        <begin position="364"/>
        <end position="366"/>
    </location>
</feature>
<feature type="helix" evidence="8">
    <location>
        <begin position="367"/>
        <end position="371"/>
    </location>
</feature>
<feature type="helix" evidence="8">
    <location>
        <begin position="377"/>
        <end position="386"/>
    </location>
</feature>
<feature type="turn" evidence="8">
    <location>
        <begin position="387"/>
        <end position="389"/>
    </location>
</feature>
<feature type="turn" evidence="8">
    <location>
        <begin position="395"/>
        <end position="397"/>
    </location>
</feature>
<feature type="helix" evidence="8">
    <location>
        <begin position="400"/>
        <end position="404"/>
    </location>
</feature>
<feature type="strand" evidence="8">
    <location>
        <begin position="406"/>
        <end position="409"/>
    </location>
</feature>
<feature type="helix" evidence="8">
    <location>
        <begin position="412"/>
        <end position="414"/>
    </location>
</feature>
<feature type="strand" evidence="8">
    <location>
        <begin position="420"/>
        <end position="423"/>
    </location>
</feature>
<feature type="strand" evidence="8">
    <location>
        <begin position="425"/>
        <end position="427"/>
    </location>
</feature>
<feature type="strand" evidence="8">
    <location>
        <begin position="431"/>
        <end position="437"/>
    </location>
</feature>
<feature type="strand" evidence="8">
    <location>
        <begin position="440"/>
        <end position="445"/>
    </location>
</feature>
<feature type="turn" evidence="8">
    <location>
        <begin position="446"/>
        <end position="448"/>
    </location>
</feature>
<feature type="strand" evidence="8">
    <location>
        <begin position="449"/>
        <end position="454"/>
    </location>
</feature>
<feature type="helix" evidence="8">
    <location>
        <begin position="458"/>
        <end position="463"/>
    </location>
</feature>
<feature type="strand" evidence="8">
    <location>
        <begin position="464"/>
        <end position="470"/>
    </location>
</feature>
<dbReference type="EC" id="3.4.-.-"/>
<dbReference type="EMBL" id="Z94043">
    <property type="protein sequence ID" value="CAB08053.1"/>
    <property type="molecule type" value="Genomic_DNA"/>
</dbReference>
<dbReference type="EMBL" id="AL009126">
    <property type="protein sequence ID" value="CAB15485.1"/>
    <property type="molecule type" value="Genomic_DNA"/>
</dbReference>
<dbReference type="EMBL" id="M22901">
    <property type="protein sequence ID" value="AAA22817.1"/>
    <property type="status" value="ALT_FRAME"/>
    <property type="molecule type" value="Genomic_DNA"/>
</dbReference>
<dbReference type="PIR" id="F70031">
    <property type="entry name" value="F70031"/>
</dbReference>
<dbReference type="RefSeq" id="NP_391360.1">
    <property type="nucleotide sequence ID" value="NC_000964.3"/>
</dbReference>
<dbReference type="RefSeq" id="WP_009968231.1">
    <property type="nucleotide sequence ID" value="NZ_OZ025638.1"/>
</dbReference>
<dbReference type="PDB" id="8WT3">
    <property type="method" value="X-ray"/>
    <property type="resolution" value="1.20 A"/>
    <property type="chains" value="A/B=339-473"/>
</dbReference>
<dbReference type="PDB" id="8WT4">
    <property type="method" value="X-ray"/>
    <property type="resolution" value="1.62 A"/>
    <property type="chains" value="B=339-473"/>
</dbReference>
<dbReference type="PDBsum" id="8WT3"/>
<dbReference type="PDBsum" id="8WT4"/>
<dbReference type="SMR" id="P40767"/>
<dbReference type="FunCoup" id="P40767">
    <property type="interactions" value="51"/>
</dbReference>
<dbReference type="STRING" id="224308.BSU34800"/>
<dbReference type="MEROPS" id="C40.010"/>
<dbReference type="PaxDb" id="224308-BSU34800"/>
<dbReference type="DNASU" id="936533"/>
<dbReference type="EnsemblBacteria" id="CAB15485">
    <property type="protein sequence ID" value="CAB15485"/>
    <property type="gene ID" value="BSU_34800"/>
</dbReference>
<dbReference type="GeneID" id="936533"/>
<dbReference type="KEGG" id="bsu:BSU34800"/>
<dbReference type="PATRIC" id="fig|224308.179.peg.3768"/>
<dbReference type="eggNOG" id="COG0791">
    <property type="taxonomic scope" value="Bacteria"/>
</dbReference>
<dbReference type="eggNOG" id="COG3883">
    <property type="taxonomic scope" value="Bacteria"/>
</dbReference>
<dbReference type="InParanoid" id="P40767"/>
<dbReference type="OrthoDB" id="9813368at2"/>
<dbReference type="PhylomeDB" id="P40767"/>
<dbReference type="BioCyc" id="BSUB:BSU34800-MONOMER"/>
<dbReference type="Proteomes" id="UP000001570">
    <property type="component" value="Chromosome"/>
</dbReference>
<dbReference type="GO" id="GO:0005576">
    <property type="term" value="C:extracellular region"/>
    <property type="evidence" value="ECO:0007669"/>
    <property type="project" value="UniProtKB-SubCell"/>
</dbReference>
<dbReference type="GO" id="GO:0008234">
    <property type="term" value="F:cysteine-type peptidase activity"/>
    <property type="evidence" value="ECO:0007669"/>
    <property type="project" value="UniProtKB-KW"/>
</dbReference>
<dbReference type="GO" id="GO:0004175">
    <property type="term" value="F:endopeptidase activity"/>
    <property type="evidence" value="ECO:0000318"/>
    <property type="project" value="GO_Central"/>
</dbReference>
<dbReference type="GO" id="GO:0071555">
    <property type="term" value="P:cell wall organization"/>
    <property type="evidence" value="ECO:0007669"/>
    <property type="project" value="UniProtKB-KW"/>
</dbReference>
<dbReference type="GO" id="GO:0000270">
    <property type="term" value="P:peptidoglycan metabolic process"/>
    <property type="evidence" value="ECO:0000318"/>
    <property type="project" value="GO_Central"/>
</dbReference>
<dbReference type="GO" id="GO:0006508">
    <property type="term" value="P:proteolysis"/>
    <property type="evidence" value="ECO:0007669"/>
    <property type="project" value="UniProtKB-KW"/>
</dbReference>
<dbReference type="Gene3D" id="6.10.250.3150">
    <property type="match status" value="1"/>
</dbReference>
<dbReference type="Gene3D" id="3.90.1720.10">
    <property type="entry name" value="endopeptidase domain like (from Nostoc punctiforme)"/>
    <property type="match status" value="1"/>
</dbReference>
<dbReference type="InterPro" id="IPR000064">
    <property type="entry name" value="NLP_P60_dom"/>
</dbReference>
<dbReference type="InterPro" id="IPR038765">
    <property type="entry name" value="Papain-like_cys_pep_sf"/>
</dbReference>
<dbReference type="InterPro" id="IPR051202">
    <property type="entry name" value="Peptidase_C40"/>
</dbReference>
<dbReference type="PANTHER" id="PTHR47053">
    <property type="entry name" value="MUREIN DD-ENDOPEPTIDASE MEPH-RELATED"/>
    <property type="match status" value="1"/>
</dbReference>
<dbReference type="PANTHER" id="PTHR47053:SF1">
    <property type="entry name" value="MUREIN DD-ENDOPEPTIDASE MEPH-RELATED"/>
    <property type="match status" value="1"/>
</dbReference>
<dbReference type="Pfam" id="PF24568">
    <property type="entry name" value="CC_PcsB"/>
    <property type="match status" value="1"/>
</dbReference>
<dbReference type="Pfam" id="PF00877">
    <property type="entry name" value="NLPC_P60"/>
    <property type="match status" value="1"/>
</dbReference>
<dbReference type="SUPFAM" id="SSF54001">
    <property type="entry name" value="Cysteine proteinases"/>
    <property type="match status" value="1"/>
</dbReference>
<dbReference type="PROSITE" id="PS51935">
    <property type="entry name" value="NLPC_P60"/>
    <property type="match status" value="1"/>
</dbReference>
<organism>
    <name type="scientific">Bacillus subtilis (strain 168)</name>
    <dbReference type="NCBI Taxonomy" id="224308"/>
    <lineage>
        <taxon>Bacteria</taxon>
        <taxon>Bacillati</taxon>
        <taxon>Bacillota</taxon>
        <taxon>Bacilli</taxon>
        <taxon>Bacillales</taxon>
        <taxon>Bacillaceae</taxon>
        <taxon>Bacillus</taxon>
    </lineage>
</organism>
<evidence type="ECO:0000255" key="1"/>
<evidence type="ECO:0000255" key="2">
    <source>
        <dbReference type="PROSITE-ProRule" id="PRU01284"/>
    </source>
</evidence>
<evidence type="ECO:0000256" key="3">
    <source>
        <dbReference type="SAM" id="MobiDB-lite"/>
    </source>
</evidence>
<evidence type="ECO:0000269" key="4">
    <source>
    </source>
</evidence>
<evidence type="ECO:0000269" key="5">
    <source>
    </source>
</evidence>
<evidence type="ECO:0000269" key="6">
    <source>
    </source>
</evidence>
<evidence type="ECO:0000305" key="7"/>
<evidence type="ECO:0007829" key="8">
    <source>
        <dbReference type="PDB" id="8WT3"/>
    </source>
</evidence>
<proteinExistence type="evidence at protein level"/>
<keyword id="KW-0002">3D-structure</keyword>
<keyword id="KW-0134">Cell wall</keyword>
<keyword id="KW-0961">Cell wall biogenesis/degradation</keyword>
<keyword id="KW-0378">Hydrolase</keyword>
<keyword id="KW-0645">Protease</keyword>
<keyword id="KW-1185">Reference proteome</keyword>
<keyword id="KW-0964">Secreted</keyword>
<keyword id="KW-0732">Signal</keyword>
<keyword id="KW-0788">Thiol protease</keyword>
<sequence>MRKSLITLGLASVIGTSSFLIPFTSKTASAETLDEKKQKIESKQSEVASSIEAKEKELTELQENQSKIEKELKDINDKALDTSNKIEDKKEENDKTKEEIKKLKKEIKETEARIEKRNEILKKRVRSLQESGGSQGYIDVLLGSTSFGDFISRATAVSSIVDADKDLIKQQEQDKAKLEDSEADLNDKLKEVQAALAKLETMQKDLDKQLNEKDKLFDEAKASQKKTAKAISELKSEASELANQKANTEAEQARIKKEQEAAAALIKKQEEAQKASDETQTDDSQTATTESSKASSSDDSSDNSSDNSSNGSSNSSSNGSSSKKSSGSNSNSGGTVISNSGGIEGAISVGSSIVGQSPYKFGGGRTQSDINNRIFDCSSFVRWAYASAGVNLGPVGGTTTDTLVGRGQAVSASEMKRGDLVFFDTYKTNGHVGIYLGNGTFLNDNTSHGVSVDSMSNPYWKAAFKGVVRRVVQ</sequence>